<sequence>MSGRKAQGKTLGVNMVRRGARSLSNKIKQKTKQIGNRPGPSRGVQGFIFFFLFNILTGKKLTTHLKRLWRMLDPRQGLAVLRKVKRVVASLMIGLSSRKRRSNEMAMMPLLILSMVILAGGVTLVRKNRWLLLNVTAEDLGKTFSLGTGNCTTNILEAKYWCPDSMEYNCPNLSPREEPDDIDCWCYGVENVRVAYGRCDAVGRSKRSRRAIDLPTHENHGLKTRQEKWMAGRMGERQLQKIERWLVRNPFFAITALAIAYLVGNNMTQRVVIALLVLAVGPAYSAHCIGITDRDFIEGVHGGTWVSATLEQGKCVTVMAPDKPSLDISLQTVAIDGPAEARKVCYSAVLTHVKINDKCPSTGEAHLAEENDGDNACKRTYSDRGWGNGCGLFGKGSIVACAKFTCAKSMSLFEVDQTKIQYVIRAQLHVGAKQENWNTDIKTLKFDALSGSQEAEFTGYGKATLECQVQTAVDFGNSYIAEMEKDSWIVDRQWAQDLTLPWQSGSGGIWREMHHLVEFEPPHAATIRVLALGNQEGSLKTALTGAMRVTKDENDNNLYKLHGGHVSCRVKLSALTLKGTSYKMCTDKMSFVKNPTDTGHGTVVMQVKVPKGAPCKIPVIVADDLTAAVNKGILVTVNPIASTNDDEVLIEVNPPFGDSYIIVGTGDSRLTYQWHKEGSSIGKLFTQTMKGAERLAVMGDAAWDFSSAGGFFTSVGKGIHTVFGSAFQGLFGGLSWITKVIMGAVLIWVGINTRNMTMSMSMILVGVIMMFLSLGVGADQGCAVNFGKRELKCGDGIFVFRDSDDWLTKYSYYPEDPVKLASIIKASHEEGKCGLNSVDSLEHEMWRSRADEINAIFEENEVDISVVVQDPKNIYQRGTHPFSRIRDGLQYGWKTWGKNLIFSPGRKNGSFIIDGKSRKECPFSNRVWNSFQIEEFGMGVFTTRVFMDAVFDYSVDCDGAILGAAVNGKKSAHGSPTFWMGSHEVNGTWMVHTLETLDYKECEWPLTHTIGTSVEESDMFMPRSIGGPVSSHNHIPGYKVQTNGPWMQVPLEVRREPCPGTSVVLDTGCDGRGKSTRSTTDSGKIIPEWCCRSCTMPPVSFHGSDGCWYPMEIRPMKTHESHLVRSWVTAGEVHAVPFGLVSMMIAMEVVLRKRQGPKQMLVGGIILLGAMLVGQVTVLDLVKLIVAVGLHFHEINNGGDAMYMALIASFSIRPGLLVGFGLRTLWSPRERLVMAFGAAMVEVALGGMMGGLWQYLNAVSLCVLTINAISSRKASNAVLPLMALLTPVTMHEVRMATMLFCTVVIVGVLHQNAKDTSMQKTIPIVALTLTSYMGLTQPFLGLCAYMSTQVFGRRSIPVNEALAAAGLVGVLAGLAFQDMENFLGPIAVGGILMMLVSVAGKVDGLELKKLGEVSWEEEAEISGSSSRYDVALSEQGEFKLLSEDKVPWDQIVMTSLALVGAAIHPFALLLVLGGWVLHIKGARRSGDVLWDIPTPKVIEECEYLEDGIYGIFQSTFLGASQRGVGVAQGGVFHTMWHVTRGAFLLRNGKKLVPSWASVKEDLVAYGGSWKLDGKWDGEEEVQLIAAVPGKAVVNVQTKPSVFKVRNGGEIGAVALDYPSGTSGSPIVNRSGEVVGLYGNGILVGDNSFVSAISQTEVKEESKEELQEIPTMLKKGMTTILDFHPGAGKTRRFLPQILAECARRRLRTLVLAPTRVVLSEMKEAFHGLDVKFHTQAFSAHGSGKEVIDAMCHATLTYRMLEPTRAVNWEVIIMDEAHFLDPASIAARGWAAHRARANESATILMTATPPGTSDEFPHSNGEIEDVQTDIPSEPWTSGHEWILADKRPTAWFLPSIRAANVMAASLRKAGKSVVVLNRKTFEKEYPTIKQKRPDFILATDIAEMGANLCVERVLDCRTAYKPVLVDEGRKVAIKGPLRISASSAAQRRGRIGRNPNRDGDSYYYSEPTSEDNAHHVCWLEASMLLDNMEVRGGMVAPLYGIEGTKTPVSPGEMRLRDDQRRVFRELVRGCDLPVWLSWQVAKPGLKTNDRKWCFEGPEEHEILNDNGETVKCRSPGGAKKALRPRWCDERVSSDQSALADFIKFAEGRRGAAEMLVVLTELPDFLAKKGGEAMDTISVFLHSEEGSRAYRNALSMMPEAMTIVMLFILAGLLTSGMVIFFMSPKGMSRMSMAMGTMAGSGYLMFLGGVKPTHISYVMLIFFVLMVVIIPEPGQQRTIQDNQVAYLIIGILTLLSIVAANELGMLEKTKEDFFGRRNIATSGGTIPWSWPDLDLKPGAAWTVYVGIVTMLSPMLHHWIKVEYGNLSLSGIAQSASVLSFMDKGIPFMKMNISVVILLVSGWNSITVIPLLCGVGGAMLHWTLILPGIKAQQSKLAQKRVFHGVAKNPVVDGNPTADIEEAPEMPALYEKKLALYLLLALSLMSVAMCRTPFSLAEGIVLSSAALGPLIEGNTSLLWNGPMAVSMTGVMRGNYYAFVGVMYNLWKMKTGRRGSASGKTLGEVWKRELNLLDKQQFELYKRTDITEVDRDMARRHLAEGKVDTGVAVSRGTAKLRWFHERGYVKLEGRVMDLGCGRGGWCYYAAAQKEVSGVKGYTLGRDGHEKPMNVQSLGWNIVTFKDKTDIHRLEPAKCETLLCDIGESSPSSVTEGERTLRVLETIEKWLACGVDNFCVKVLAPYMPDVIEKLELLQRRFGGTIIRNPLSRNSTHEMYYVSGARSNITFTVNQTSRLLMRRMRRPTGKVTLEPDVILPIGTRSVETDKGPLDRDAIEERVERIKTEYAATWFYDNDNPYRTWHYCGSYITKTSGSAASMINGVIKILTFPWDRIEEVTRMAMTDTTPFGQQRVFKEKVDTRAKDPPAGTRKIMKVVNRWLFRHLAREKNPRLCTKEEFIAKVRSHAAVGAFLEEQEQWKTANEAVQDPKFWEMVDAERKLHQQGRCQSCVYNMMGKREKKLSEFGKAKGSRAIWYMWLGARFLEFEALGFLNEDHWASRENSGGGVEGIGLQYLGYVIKDLSTKEGGGFYADDTAGWDTRITEADLDDEQEIMSYMNAEQRKLAWAVMEMTYKNKVVKVLRPAPGGKAFMDIISRRDQRGSGQVVTYALNTITNLKVQLIRMAEAEMVINHQHVNECDEGVLARLDAWLAENGCDRLARMAVSGDDCVVRPVDDRFGLALSHLNAMSKVRKDISEWQPSKEWTDWENVPFCSHHFHELVLKDGRKVVVPCRDQDELIGRGRVSPGNGWMIKETACLSKAYANMWSLMYFHKRDMRLLSFAVSSAVPMAWVPSGRTTWSVHGKGEWMTTQDMLDVWNRVWVLNNPHMKDKTTVKEWRDVPYLTKRQDKLCGSLIGMTNRATWASHIHLVIHRIRTLIGQEKYTDYLTVMDRYSVDADLQPGELI</sequence>
<proteinExistence type="inferred from homology"/>
<comment type="function">
    <molecule>Capsid protein C</molecule>
    <text evidence="6">Plays a role in virus budding by binding to the cell membrane and gathering the viral RNA into a nucleocapsid that forms the core of a mature virus particle. During virus entry, may induce genome penetration into the host cytoplasm after hemifusion induced by the surface proteins. Can migrate to the cell nucleus where it modulates host functions.</text>
</comment>
<comment type="function">
    <molecule>Capsid protein C</molecule>
    <text evidence="2">Inhibits RNA silencing by interfering with host Dicer.</text>
</comment>
<comment type="function">
    <molecule>Peptide pr</molecule>
    <text evidence="6">Prevents premature fusion activity of envelope proteins in trans-Golgi by binding to envelope protein E at pH6.0. After virion release in extracellular space, gets dissociated from E dimers.</text>
</comment>
<comment type="function">
    <molecule>Protein prM</molecule>
    <text evidence="6">Acts as a chaperone for envelope protein E during intracellular virion assembly by masking and inactivating envelope protein E fusion peptide. prM is the only viral peptide matured by host furin in the trans-Golgi network probably to avoid catastrophic activation of the viral fusion activity in acidic Golgi compartment prior to virion release. prM-E cleavage is inefficient, and many virions are only partially matured. These uncleaved prM would play a role in immune evasion.</text>
</comment>
<comment type="function">
    <molecule>Small envelope protein M</molecule>
    <text evidence="6">May play a role in virus budding. Exerts cytotoxic effects by activating a mitochondrial apoptotic pathway through M ectodomain. May display a viroporin activity.</text>
</comment>
<comment type="function">
    <molecule>Envelope protein E</molecule>
    <text evidence="6">Binds to host cell surface receptor and mediates fusion between viral and cellular membranes. Envelope protein is synthesized in the endoplasmic reticulum in the form of heterodimer with protein prM. They play a role in virion budding in the ER, and the newly formed immature particle is covered with 60 spikes composed of heterodimer between precursor prM and envelope protein E. The virion is transported to the Golgi apparatus where the low pH causes dissociation of PrM-E heterodimers and formation of E homodimers. prM-E cleavage is inefficient, and many virions are only partially matured. These uncleaved prM would play a role in immune evasion.</text>
</comment>
<comment type="function">
    <molecule>Non-structural protein 1</molecule>
    <text evidence="10">Involved in immune evasion, pathogenesis and viral replication. Once cleaved off the polyprotein, is targeted to three destinations: the viral replication cycle, the plasma membrane and the extracellular compartment. Essential for viral replication. Required for formation of the replication complex and recruitment of other non-structural proteins to the ER-derived membrane structures. Excreted as a hexameric lipoparticle that plays a role against host immune response. Antagonizing the complement function. Binds to the host macrophages and dendritic cells. Inhibits signal transduction originating from Toll-like receptor 3 (TLR3).</text>
</comment>
<comment type="function">
    <molecule>Non-structural protein 2A</molecule>
    <text evidence="6">Component of the viral RNA replication complex that functions in virion assembly and antagonizes the host immune response.</text>
</comment>
<comment type="function">
    <molecule>Serine protease subunit NS2B</molecule>
    <text evidence="6 14">Required cofactor for the serine protease function of NS3. May have membrane-destabilizing activity and form viroporins (By similarity).</text>
</comment>
<comment type="function">
    <molecule>Serine protease NS3</molecule>
    <text evidence="2 15">Displays three enzymatic activities: serine protease, NTPase and RNA helicase. NS3 serine protease, in association with NS2B, performs its autocleavage and cleaves the polyprotein at dibasic sites in the cytoplasm: C-prM, NS2A-NS2B, NS2B-NS3, NS3-NS4A, NS4A-2K and NS4B-NS5. NS3 RNA helicase binds RNA and unwinds dsRNA in the 3' to 5' direction. Also plays a role in virus assembly (By similarity).</text>
</comment>
<comment type="function">
    <molecule>Non-structural protein 4A</molecule>
    <text evidence="10">Regulates the ATPase activity of the NS3 helicase activity. NS4A allows NS3 helicase to conserve energy during unwinding.</text>
</comment>
<comment type="function">
    <molecule>Peptide 2k</molecule>
    <text evidence="6">Functions as a signal peptide for NS4B and is required for the interferon antagonism activity of the latter.</text>
</comment>
<comment type="function">
    <molecule>Non-structural protein 4B</molecule>
    <text evidence="10">Induces the formation of ER-derived membrane vesicles where the viral replication takes place. Inhibits interferon (IFN)-induced host STAT1 phosphorylation and nuclear translocation, thereby preventing the establishment of cellular antiviral state by blocking the IFN-alpha/beta pathway.</text>
</comment>
<comment type="function">
    <molecule>RNA-directed RNA polymerase NS5</molecule>
    <text evidence="2">Replicates the viral (+) and (-) RNA genome, and performs the capping of genomes in the cytoplasm. NS5 methylates viral RNA cap at guanine N-7 and ribose 2'-O positions (By similarity). Besides its role in RNA genome replication, also prevents the establishment of cellular antiviral state by blocking the interferon-alpha/beta (IFN-alpha/beta) signaling pathway. IFN-I induces binding of NS5 to host IFN-activated transcription factor STAT2, preventing its transcriptional activity. Host TRIM23 is the E3 ligase that interacts with and polyubiquitinates NS5 to promote its binding to STAT2 and trigger IFN-I signaling inhibition.</text>
</comment>
<comment type="catalytic activity">
    <reaction>
        <text>Selective hydrolysis of -Xaa-Xaa-|-Yaa- bonds in which each of the Xaa can be either Arg or Lys and Yaa can be either Ser or Ala.</text>
        <dbReference type="EC" id="3.4.21.91"/>
    </reaction>
</comment>
<comment type="catalytic activity">
    <reaction evidence="12">
        <text>RNA(n) + a ribonucleoside 5'-triphosphate = RNA(n+1) + diphosphate</text>
        <dbReference type="Rhea" id="RHEA:21248"/>
        <dbReference type="Rhea" id="RHEA-COMP:14527"/>
        <dbReference type="Rhea" id="RHEA-COMP:17342"/>
        <dbReference type="ChEBI" id="CHEBI:33019"/>
        <dbReference type="ChEBI" id="CHEBI:61557"/>
        <dbReference type="ChEBI" id="CHEBI:140395"/>
        <dbReference type="EC" id="2.7.7.48"/>
    </reaction>
</comment>
<comment type="catalytic activity">
    <reaction>
        <text>a ribonucleoside 5'-triphosphate + H2O = a ribonucleoside 5'-diphosphate + phosphate + H(+)</text>
        <dbReference type="Rhea" id="RHEA:23680"/>
        <dbReference type="ChEBI" id="CHEBI:15377"/>
        <dbReference type="ChEBI" id="CHEBI:15378"/>
        <dbReference type="ChEBI" id="CHEBI:43474"/>
        <dbReference type="ChEBI" id="CHEBI:57930"/>
        <dbReference type="ChEBI" id="CHEBI:61557"/>
        <dbReference type="EC" id="3.6.1.15"/>
    </reaction>
</comment>
<comment type="catalytic activity">
    <reaction>
        <text>ATP + H2O = ADP + phosphate + H(+)</text>
        <dbReference type="Rhea" id="RHEA:13065"/>
        <dbReference type="ChEBI" id="CHEBI:15377"/>
        <dbReference type="ChEBI" id="CHEBI:15378"/>
        <dbReference type="ChEBI" id="CHEBI:30616"/>
        <dbReference type="ChEBI" id="CHEBI:43474"/>
        <dbReference type="ChEBI" id="CHEBI:456216"/>
        <dbReference type="EC" id="3.6.4.13"/>
    </reaction>
</comment>
<comment type="catalytic activity">
    <reaction evidence="16">
        <text>a 5'-end (5'-triphosphoguanosine)-ribonucleoside in mRNA + S-adenosyl-L-methionine = a 5'-end (N(7)-methyl 5'-triphosphoguanosine)-ribonucleoside in mRNA + S-adenosyl-L-homocysteine</text>
        <dbReference type="Rhea" id="RHEA:67008"/>
        <dbReference type="Rhea" id="RHEA-COMP:17166"/>
        <dbReference type="Rhea" id="RHEA-COMP:17167"/>
        <dbReference type="ChEBI" id="CHEBI:57856"/>
        <dbReference type="ChEBI" id="CHEBI:59789"/>
        <dbReference type="ChEBI" id="CHEBI:156461"/>
        <dbReference type="ChEBI" id="CHEBI:167617"/>
        <dbReference type="EC" id="2.1.1.56"/>
    </reaction>
</comment>
<comment type="catalytic activity">
    <reaction evidence="16">
        <text>a 5'-end (N(7)-methyl 5'-triphosphoguanosine)-ribonucleoside in mRNA + S-adenosyl-L-methionine = a 5'-end (N(7)-methyl 5'-triphosphoguanosine)-(2'-O-methyl-ribonucleoside) in mRNA + S-adenosyl-L-homocysteine + H(+)</text>
        <dbReference type="Rhea" id="RHEA:67020"/>
        <dbReference type="Rhea" id="RHEA-COMP:17167"/>
        <dbReference type="Rhea" id="RHEA-COMP:17168"/>
        <dbReference type="ChEBI" id="CHEBI:15378"/>
        <dbReference type="ChEBI" id="CHEBI:57856"/>
        <dbReference type="ChEBI" id="CHEBI:59789"/>
        <dbReference type="ChEBI" id="CHEBI:156461"/>
        <dbReference type="ChEBI" id="CHEBI:167609"/>
        <dbReference type="EC" id="2.1.1.57"/>
    </reaction>
</comment>
<comment type="subunit">
    <molecule>Capsid protein C</molecule>
    <text evidence="6">Homodimer (By similarity). Interacts (via N-terminus) with host EXOC1 (via C-terminus); this interaction results in EXOC1 degradation through the proteasome degradation pathway (By similarity).</text>
</comment>
<comment type="subunit">
    <molecule>Protein prM</molecule>
    <text evidence="6">Forms heterodimers with envelope protein E in the endoplasmic reticulum and Golgi.</text>
</comment>
<comment type="subunit">
    <molecule>Envelope protein E</molecule>
    <text evidence="6">Homodimer; in the endoplasmic reticulum and Golgi (By similarity). Interacts with protein prM (By similarity). Interacts with non-structural protein 1 (By similarity).</text>
</comment>
<comment type="subunit">
    <molecule>Non-structural protein 1</molecule>
    <text evidence="6">Homodimer; Homohexamer when secreted (By similarity). Interacts with envelope protein E (By similarity).</text>
</comment>
<comment type="subunit">
    <molecule>Non-structural protein 2A</molecule>
    <text evidence="2">Interacts (via N-terminus) with serine protease NS3.</text>
</comment>
<comment type="subunit">
    <molecule>Serine protease subunit NS2B</molecule>
    <text evidence="6">Forms a heterodimer with serine protease NS3 (By similarity). May form homooligomers (By similarity).</text>
</comment>
<comment type="subunit">
    <molecule>Serine protease NS3</molecule>
    <text evidence="6">Forms a heterodimer with NS2B (By similarity). Interacts with non-structural protein 2A (via N-terminus) (By similarity). Interacts with NS4B (By similarity). Interacts with unphosphorylated RNA-directed RNA polymerase NS5; this interaction stimulates RNA-directed RNA polymerase NS5 guanylyltransferase activity (By similarity). NS3 interacts with host PDCD6IP; this interaction contributes to virion release (By similarity).</text>
</comment>
<comment type="subunit">
    <molecule>Non-structural protein 4B</molecule>
    <text evidence="6">Interacts with serine protease NS3 (By similarity).</text>
</comment>
<comment type="subunit">
    <molecule>RNA-directed RNA polymerase NS5</molecule>
    <text evidence="2">Homodimer (By similarity). Interacts with host STAT2; this interaction prevents the establishment of cellular antiviral state (By similarity). Interacts with serine protease NS3 (By similarity). Interacts with host TRIM23; this interaction leads to NS5 ubiquitination (By similarity).</text>
</comment>
<comment type="subcellular location">
    <molecule>Capsid protein C</molecule>
    <subcellularLocation>
        <location evidence="6">Virion</location>
    </subcellularLocation>
    <subcellularLocation>
        <location evidence="6">Host nucleus</location>
    </subcellularLocation>
    <subcellularLocation>
        <location evidence="6">Host cytoplasm</location>
        <location evidence="6">Host perinuclear region</location>
    </subcellularLocation>
    <subcellularLocation>
        <location evidence="6">Host cytoplasm</location>
    </subcellularLocation>
</comment>
<comment type="subcellular location">
    <molecule>Peptide pr</molecule>
    <subcellularLocation>
        <location evidence="6">Secreted</location>
    </subcellularLocation>
</comment>
<comment type="subcellular location">
    <molecule>Small envelope protein M</molecule>
    <subcellularLocation>
        <location evidence="2">Virion membrane</location>
        <topology evidence="2">Multi-pass membrane protein</topology>
    </subcellularLocation>
    <subcellularLocation>
        <location evidence="2">Host endoplasmic reticulum membrane</location>
        <topology evidence="11">Multi-pass membrane protein</topology>
    </subcellularLocation>
    <text evidence="2">ER membrane retention is mediated by the transmembrane domains.</text>
</comment>
<comment type="subcellular location">
    <molecule>Envelope protein E</molecule>
    <subcellularLocation>
        <location evidence="18">Virion membrane</location>
        <topology evidence="2">Multi-pass membrane protein</topology>
    </subcellularLocation>
    <subcellularLocation>
        <location evidence="2">Host endoplasmic reticulum membrane</location>
        <topology evidence="11">Multi-pass membrane protein</topology>
    </subcellularLocation>
    <text evidence="2">ER membrane retention is mediated by the transmembrane domains.</text>
</comment>
<comment type="subcellular location">
    <molecule>Non-structural protein 1</molecule>
    <subcellularLocation>
        <location evidence="6">Secreted</location>
    </subcellularLocation>
    <subcellularLocation>
        <location>Host endoplasmic reticulum membrane</location>
        <topology>Peripheral membrane protein</topology>
        <orientation evidence="6">Lumenal side</orientation>
    </subcellularLocation>
    <text evidence="10">Located in RE-derived vesicles hosting the replication complex.</text>
</comment>
<comment type="subcellular location">
    <molecule>Non-structural protein 2A</molecule>
    <subcellularLocation>
        <location evidence="6">Host endoplasmic reticulum membrane</location>
        <topology evidence="6">Multi-pass membrane protein</topology>
    </subcellularLocation>
</comment>
<comment type="subcellular location">
    <molecule>Serine protease subunit NS2B</molecule>
    <subcellularLocation>
        <location>Host endoplasmic reticulum membrane</location>
        <topology evidence="6">Multi-pass membrane protein</topology>
    </subcellularLocation>
</comment>
<comment type="subcellular location">
    <molecule>Serine protease NS3</molecule>
    <subcellularLocation>
        <location evidence="15">Host endoplasmic reticulum membrane</location>
        <topology evidence="15">Peripheral membrane protein</topology>
        <orientation evidence="15">Cytoplasmic side</orientation>
    </subcellularLocation>
    <text evidence="15">Remains non-covalently associated to serine protease subunit NS2B.</text>
</comment>
<comment type="subcellular location">
    <molecule>Non-structural protein 4A</molecule>
    <subcellularLocation>
        <location evidence="6">Host endoplasmic reticulum membrane</location>
        <topology evidence="6">Multi-pass membrane protein</topology>
    </subcellularLocation>
    <text evidence="6">Located in RE-associated vesicles hosting the replication complex.</text>
</comment>
<comment type="subcellular location">
    <molecule>Non-structural protein 4B</molecule>
    <subcellularLocation>
        <location evidence="6">Host endoplasmic reticulum membrane</location>
        <topology evidence="6">Multi-pass membrane protein</topology>
    </subcellularLocation>
    <text evidence="10">Located in RE-derived vesicles hosting the replication complex.</text>
</comment>
<comment type="subcellular location">
    <molecule>RNA-directed RNA polymerase NS5</molecule>
    <subcellularLocation>
        <location>Host endoplasmic reticulum membrane</location>
        <topology>Peripheral membrane protein</topology>
        <orientation>Cytoplasmic side</orientation>
    </subcellularLocation>
    <subcellularLocation>
        <location evidence="6">Host nucleus</location>
    </subcellularLocation>
    <text evidence="6">Located in RE-associated vesicles hosting the replication complex. NS5 protein is mainly localized in the nucleus rather than in ER vesicles.</text>
</comment>
<comment type="domain">
    <text evidence="6">The transmembrane domains of the small envelope protein M and envelope protein E contain an endoplasmic reticulum retention signal.</text>
</comment>
<comment type="PTM">
    <molecule>Genome polyprotein</molecule>
    <text evidence="2">Specific enzymatic cleavages in vivo yield mature proteins. The nascent capsid protein C contains a C-terminal hydrophobic domain that act as a signal sequence for translocation of prM into the lumen of the ER. Mature capsid protein C is cleaved at a site upstream of this hydrophobic domain by NS3. prM is cleaved in post-Golgi vesicles by a host furin, releasing the mature small envelope protein M, and peptide pr. Non-structural protein 2A-alpha, a C-terminally truncated form of non-structural protein 2A, results from partial cleavage by NS3. Specific enzymatic cleavages in vivo yield mature proteins peptide 2K acts as a signal sequence and is removed from the N-terminus of NS4B by the host signal peptidase in the ER lumen. Signal cleavage at the 2K-4B site requires a prior NS3 protease-mediated cleavage at the 4A-2K site.</text>
</comment>
<comment type="PTM">
    <molecule>Protein prM</molecule>
    <text evidence="6">Cleaved in post-Golgi vesicles by a host furin, releasing the mature small envelope protein M, and peptide pr. This cleavage is incomplete as up to 30% of viral particles still carry uncleaved prM.</text>
</comment>
<comment type="PTM">
    <molecule>Envelope protein E</molecule>
    <text evidence="6">N-glycosylated.</text>
</comment>
<comment type="PTM">
    <molecule>Non-structural protein 1</molecule>
    <text evidence="6">N-glycosylated. The excreted form is glycosylated and this is required for efficient secretion of the protein from infected cells.</text>
</comment>
<comment type="PTM">
    <text evidence="2">Polyubiquitinated; ubiquitination is probably mediated by host TRIM23 and is prerequisite for NS5-STAT2 interaction. NS5 is not ISGylated or sumoylated.</text>
</comment>
<comment type="PTM">
    <molecule>Serine protease NS3</molecule>
    <text evidence="8">Acetylated by host KAT5. Acetylation modulates NS3 RNA-binding and unwinding activities and plays an important positive role for viral replication.</text>
</comment>
<comment type="PTM">
    <molecule>RNA-directed RNA polymerase NS5</molecule>
    <text evidence="6">Phosphorylated on serines residues. This phosphorylation may trigger NS5 nuclear localization.</text>
</comment>
<comment type="similarity">
    <text evidence="16">In the N-terminal section; belongs to the class I-like SAM-binding methyltransferase superfamily. mRNA cap 0-1 NS5-type methyltransferase family.</text>
</comment>
<name>POLG_YEFVE</name>
<accession>Q074N0</accession>
<dbReference type="EC" id="3.4.21.91"/>
<dbReference type="EC" id="3.6.1.15" evidence="10"/>
<dbReference type="EC" id="3.6.4.13" evidence="10"/>
<dbReference type="EC" id="2.1.1.56" evidence="16"/>
<dbReference type="EC" id="2.1.1.57" evidence="16"/>
<dbReference type="EC" id="2.7.7.48" evidence="12"/>
<dbReference type="EMBL" id="DQ235229">
    <property type="protein sequence ID" value="ABB69689.1"/>
    <property type="molecule type" value="Genomic_RNA"/>
</dbReference>
<dbReference type="BMRB" id="Q074N0"/>
<dbReference type="SMR" id="Q074N0"/>
<dbReference type="MEROPS" id="S07.001"/>
<dbReference type="Proteomes" id="UP000008604">
    <property type="component" value="Genome"/>
</dbReference>
<dbReference type="GO" id="GO:0005576">
    <property type="term" value="C:extracellular region"/>
    <property type="evidence" value="ECO:0007669"/>
    <property type="project" value="UniProtKB-SubCell"/>
</dbReference>
<dbReference type="GO" id="GO:0044167">
    <property type="term" value="C:host cell endoplasmic reticulum membrane"/>
    <property type="evidence" value="ECO:0007669"/>
    <property type="project" value="UniProtKB-SubCell"/>
</dbReference>
<dbReference type="GO" id="GO:0042025">
    <property type="term" value="C:host cell nucleus"/>
    <property type="evidence" value="ECO:0007669"/>
    <property type="project" value="UniProtKB-SubCell"/>
</dbReference>
<dbReference type="GO" id="GO:0044220">
    <property type="term" value="C:host cell perinuclear region of cytoplasm"/>
    <property type="evidence" value="ECO:0007669"/>
    <property type="project" value="UniProtKB-SubCell"/>
</dbReference>
<dbReference type="GO" id="GO:0016020">
    <property type="term" value="C:membrane"/>
    <property type="evidence" value="ECO:0007669"/>
    <property type="project" value="UniProtKB-KW"/>
</dbReference>
<dbReference type="GO" id="GO:0019028">
    <property type="term" value="C:viral capsid"/>
    <property type="evidence" value="ECO:0007669"/>
    <property type="project" value="UniProtKB-KW"/>
</dbReference>
<dbReference type="GO" id="GO:0019031">
    <property type="term" value="C:viral envelope"/>
    <property type="evidence" value="ECO:0007669"/>
    <property type="project" value="UniProtKB-KW"/>
</dbReference>
<dbReference type="GO" id="GO:0055036">
    <property type="term" value="C:virion membrane"/>
    <property type="evidence" value="ECO:0007669"/>
    <property type="project" value="UniProtKB-SubCell"/>
</dbReference>
<dbReference type="GO" id="GO:0005524">
    <property type="term" value="F:ATP binding"/>
    <property type="evidence" value="ECO:0007669"/>
    <property type="project" value="UniProtKB-KW"/>
</dbReference>
<dbReference type="GO" id="GO:0016887">
    <property type="term" value="F:ATP hydrolysis activity"/>
    <property type="evidence" value="ECO:0007669"/>
    <property type="project" value="RHEA"/>
</dbReference>
<dbReference type="GO" id="GO:0003725">
    <property type="term" value="F:double-stranded RNA binding"/>
    <property type="evidence" value="ECO:0007669"/>
    <property type="project" value="InterPro"/>
</dbReference>
<dbReference type="GO" id="GO:0005525">
    <property type="term" value="F:GTP binding"/>
    <property type="evidence" value="ECO:0007669"/>
    <property type="project" value="UniProtKB-KW"/>
</dbReference>
<dbReference type="GO" id="GO:0046872">
    <property type="term" value="F:metal ion binding"/>
    <property type="evidence" value="ECO:0007669"/>
    <property type="project" value="UniProtKB-KW"/>
</dbReference>
<dbReference type="GO" id="GO:0004483">
    <property type="term" value="F:mRNA (nucleoside-2'-O-)-methyltransferase activity"/>
    <property type="evidence" value="ECO:0007669"/>
    <property type="project" value="UniProtKB-EC"/>
</dbReference>
<dbReference type="GO" id="GO:0004482">
    <property type="term" value="F:mRNA 5'-cap (guanine-N7-)-methyltransferase activity"/>
    <property type="evidence" value="ECO:0007669"/>
    <property type="project" value="UniProtKB-EC"/>
</dbReference>
<dbReference type="GO" id="GO:0046983">
    <property type="term" value="F:protein dimerization activity"/>
    <property type="evidence" value="ECO:0007669"/>
    <property type="project" value="InterPro"/>
</dbReference>
<dbReference type="GO" id="GO:0003724">
    <property type="term" value="F:RNA helicase activity"/>
    <property type="evidence" value="ECO:0007669"/>
    <property type="project" value="UniProtKB-EC"/>
</dbReference>
<dbReference type="GO" id="GO:0003968">
    <property type="term" value="F:RNA-directed RNA polymerase activity"/>
    <property type="evidence" value="ECO:0007669"/>
    <property type="project" value="UniProtKB-KW"/>
</dbReference>
<dbReference type="GO" id="GO:0004252">
    <property type="term" value="F:serine-type endopeptidase activity"/>
    <property type="evidence" value="ECO:0007669"/>
    <property type="project" value="InterPro"/>
</dbReference>
<dbReference type="GO" id="GO:0005198">
    <property type="term" value="F:structural molecule activity"/>
    <property type="evidence" value="ECO:0007669"/>
    <property type="project" value="InterPro"/>
</dbReference>
<dbReference type="GO" id="GO:0075512">
    <property type="term" value="P:clathrin-dependent endocytosis of virus by host cell"/>
    <property type="evidence" value="ECO:0007669"/>
    <property type="project" value="UniProtKB-KW"/>
</dbReference>
<dbReference type="GO" id="GO:0039654">
    <property type="term" value="P:fusion of virus membrane with host endosome membrane"/>
    <property type="evidence" value="ECO:0007669"/>
    <property type="project" value="UniProtKB-KW"/>
</dbReference>
<dbReference type="GO" id="GO:0006508">
    <property type="term" value="P:proteolysis"/>
    <property type="evidence" value="ECO:0007669"/>
    <property type="project" value="UniProtKB-KW"/>
</dbReference>
<dbReference type="GO" id="GO:0039520">
    <property type="term" value="P:symbiont-mediated activation of host autophagy"/>
    <property type="evidence" value="ECO:0007669"/>
    <property type="project" value="UniProtKB-KW"/>
</dbReference>
<dbReference type="GO" id="GO:0052170">
    <property type="term" value="P:symbiont-mediated suppression of host innate immune response"/>
    <property type="evidence" value="ECO:0007669"/>
    <property type="project" value="UniProtKB-KW"/>
</dbReference>
<dbReference type="GO" id="GO:0039564">
    <property type="term" value="P:symbiont-mediated suppression of host JAK-STAT cascade via inhibition of STAT2 activity"/>
    <property type="evidence" value="ECO:0007669"/>
    <property type="project" value="UniProtKB-KW"/>
</dbReference>
<dbReference type="GO" id="GO:0039502">
    <property type="term" value="P:symbiont-mediated suppression of host type I interferon-mediated signaling pathway"/>
    <property type="evidence" value="ECO:0007669"/>
    <property type="project" value="UniProtKB-KW"/>
</dbReference>
<dbReference type="GO" id="GO:0039694">
    <property type="term" value="P:viral RNA genome replication"/>
    <property type="evidence" value="ECO:0007669"/>
    <property type="project" value="InterPro"/>
</dbReference>
<dbReference type="GO" id="GO:0019062">
    <property type="term" value="P:virion attachment to host cell"/>
    <property type="evidence" value="ECO:0007669"/>
    <property type="project" value="UniProtKB-KW"/>
</dbReference>
<dbReference type="CDD" id="cd20761">
    <property type="entry name" value="capping_2-OMTase_Flaviviridae"/>
    <property type="match status" value="1"/>
</dbReference>
<dbReference type="CDD" id="cd17931">
    <property type="entry name" value="DEXHc_viral_Ns3"/>
    <property type="match status" value="1"/>
</dbReference>
<dbReference type="CDD" id="cd12149">
    <property type="entry name" value="Flavi_E_C"/>
    <property type="match status" value="1"/>
</dbReference>
<dbReference type="CDD" id="cd17038">
    <property type="entry name" value="Flavi_M"/>
    <property type="match status" value="1"/>
</dbReference>
<dbReference type="CDD" id="cd23204">
    <property type="entry name" value="Flavivirus_RdRp"/>
    <property type="match status" value="1"/>
</dbReference>
<dbReference type="FunFam" id="1.20.1280.260:FF:000001">
    <property type="entry name" value="Envelope glycoprotein"/>
    <property type="match status" value="1"/>
</dbReference>
<dbReference type="FunFam" id="2.60.260.50:FF:000001">
    <property type="entry name" value="Genome polyprotein"/>
    <property type="match status" value="1"/>
</dbReference>
<dbReference type="FunFam" id="3.40.50.150:FF:000105">
    <property type="entry name" value="Genome polyprotein"/>
    <property type="match status" value="1"/>
</dbReference>
<dbReference type="Gene3D" id="1.10.260.90">
    <property type="match status" value="1"/>
</dbReference>
<dbReference type="Gene3D" id="1.20.1280.260">
    <property type="match status" value="1"/>
</dbReference>
<dbReference type="Gene3D" id="2.40.10.120">
    <property type="match status" value="2"/>
</dbReference>
<dbReference type="Gene3D" id="2.60.40.350">
    <property type="match status" value="1"/>
</dbReference>
<dbReference type="Gene3D" id="1.10.8.970">
    <property type="entry name" value="Flavivirus envelope glycoprotein M-like"/>
    <property type="match status" value="1"/>
</dbReference>
<dbReference type="Gene3D" id="2.60.260.50">
    <property type="entry name" value="Flavivirus polyprotein propeptide domain"/>
    <property type="match status" value="1"/>
</dbReference>
<dbReference type="Gene3D" id="3.30.70.2840">
    <property type="entry name" value="Flavivirus RNA-directed RNA polymerase, thumb domain"/>
    <property type="match status" value="3"/>
</dbReference>
<dbReference type="Gene3D" id="3.40.50.300">
    <property type="entry name" value="P-loop containing nucleotide triphosphate hydrolases"/>
    <property type="match status" value="2"/>
</dbReference>
<dbReference type="Gene3D" id="2.60.98.10">
    <property type="entry name" value="Tick-borne Encephalitis virus Glycoprotein, domain 1"/>
    <property type="match status" value="1"/>
</dbReference>
<dbReference type="Gene3D" id="3.40.50.150">
    <property type="entry name" value="Vaccinia Virus protein VP39"/>
    <property type="match status" value="1"/>
</dbReference>
<dbReference type="Gene3D" id="3.30.67.10">
    <property type="entry name" value="Viral Envelope Glycoprotein, domain 2"/>
    <property type="match status" value="1"/>
</dbReference>
<dbReference type="Gene3D" id="3.30.387.10">
    <property type="entry name" value="Viral Envelope Glycoprotein, domain 3"/>
    <property type="match status" value="1"/>
</dbReference>
<dbReference type="InterPro" id="IPR043502">
    <property type="entry name" value="DNA/RNA_pol_sf"/>
</dbReference>
<dbReference type="InterPro" id="IPR000069">
    <property type="entry name" value="Env_glycoprot_M_flavivir"/>
</dbReference>
<dbReference type="InterPro" id="IPR038302">
    <property type="entry name" value="Env_glycoprot_M_sf_flavivir"/>
</dbReference>
<dbReference type="InterPro" id="IPR013755">
    <property type="entry name" value="Flav_gly_cen_dom_subdom1"/>
</dbReference>
<dbReference type="InterPro" id="IPR001122">
    <property type="entry name" value="Flavi_capsidC"/>
</dbReference>
<dbReference type="InterPro" id="IPR011492">
    <property type="entry name" value="Flavi_DEAD"/>
</dbReference>
<dbReference type="InterPro" id="IPR027287">
    <property type="entry name" value="Flavi_E_Ig-like"/>
</dbReference>
<dbReference type="InterPro" id="IPR026470">
    <property type="entry name" value="Flavi_E_Stem/Anchor_dom"/>
</dbReference>
<dbReference type="InterPro" id="IPR038345">
    <property type="entry name" value="Flavi_E_Stem/Anchor_dom_sf"/>
</dbReference>
<dbReference type="InterPro" id="IPR011998">
    <property type="entry name" value="Flavi_Glycoprot_E_cen/dimer"/>
</dbReference>
<dbReference type="InterPro" id="IPR001157">
    <property type="entry name" value="Flavi_NS1"/>
</dbReference>
<dbReference type="InterPro" id="IPR000752">
    <property type="entry name" value="Flavi_NS2A"/>
</dbReference>
<dbReference type="InterPro" id="IPR000487">
    <property type="entry name" value="Flavi_NS2B"/>
</dbReference>
<dbReference type="InterPro" id="IPR001850">
    <property type="entry name" value="Flavi_NS3_S7"/>
</dbReference>
<dbReference type="InterPro" id="IPR000404">
    <property type="entry name" value="Flavi_NS4A"/>
</dbReference>
<dbReference type="InterPro" id="IPR001528">
    <property type="entry name" value="Flavi_NS4B"/>
</dbReference>
<dbReference type="InterPro" id="IPR046811">
    <property type="entry name" value="Flavi_NS5_thumb"/>
</dbReference>
<dbReference type="InterPro" id="IPR002535">
    <property type="entry name" value="Flavi_propep"/>
</dbReference>
<dbReference type="InterPro" id="IPR038688">
    <property type="entry name" value="Flavi_propep_sf"/>
</dbReference>
<dbReference type="InterPro" id="IPR047530">
    <property type="entry name" value="Flavi_RdRp"/>
</dbReference>
<dbReference type="InterPro" id="IPR000208">
    <property type="entry name" value="Flavi_RdRp_fingers/palm"/>
</dbReference>
<dbReference type="InterPro" id="IPR000336">
    <property type="entry name" value="Flavivir/Alphavir_Ig-like_sf"/>
</dbReference>
<dbReference type="InterPro" id="IPR014412">
    <property type="entry name" value="Gen_Poly_FLV"/>
</dbReference>
<dbReference type="InterPro" id="IPR036253">
    <property type="entry name" value="Glycoprot_cen/dimer_sf"/>
</dbReference>
<dbReference type="InterPro" id="IPR038055">
    <property type="entry name" value="Glycoprot_E_dimer_dom"/>
</dbReference>
<dbReference type="InterPro" id="IPR013756">
    <property type="entry name" value="GlyE_cen_dom_subdom2"/>
</dbReference>
<dbReference type="InterPro" id="IPR014001">
    <property type="entry name" value="Helicase_ATP-bd"/>
</dbReference>
<dbReference type="InterPro" id="IPR001650">
    <property type="entry name" value="Helicase_C-like"/>
</dbReference>
<dbReference type="InterPro" id="IPR014756">
    <property type="entry name" value="Ig_E-set"/>
</dbReference>
<dbReference type="InterPro" id="IPR026490">
    <property type="entry name" value="mRNA_cap_0/1_MeTrfase"/>
</dbReference>
<dbReference type="InterPro" id="IPR049486">
    <property type="entry name" value="NS3-hel_C_flaviviridae"/>
</dbReference>
<dbReference type="InterPro" id="IPR027417">
    <property type="entry name" value="P-loop_NTPase"/>
</dbReference>
<dbReference type="InterPro" id="IPR009003">
    <property type="entry name" value="Peptidase_S1_PA"/>
</dbReference>
<dbReference type="InterPro" id="IPR007094">
    <property type="entry name" value="RNA-dir_pol_PSvirus"/>
</dbReference>
<dbReference type="InterPro" id="IPR002877">
    <property type="entry name" value="RNA_MeTrfase_FtsJ_dom"/>
</dbReference>
<dbReference type="InterPro" id="IPR029063">
    <property type="entry name" value="SAM-dependent_MTases_sf"/>
</dbReference>
<dbReference type="NCBIfam" id="TIGR04240">
    <property type="entry name" value="flavi_E_stem"/>
    <property type="match status" value="1"/>
</dbReference>
<dbReference type="Pfam" id="PF20907">
    <property type="entry name" value="Flav_NS3-hel_C"/>
    <property type="match status" value="1"/>
</dbReference>
<dbReference type="Pfam" id="PF01003">
    <property type="entry name" value="Flavi_capsid"/>
    <property type="match status" value="1"/>
</dbReference>
<dbReference type="Pfam" id="PF07652">
    <property type="entry name" value="Flavi_DEAD"/>
    <property type="match status" value="1"/>
</dbReference>
<dbReference type="Pfam" id="PF21659">
    <property type="entry name" value="Flavi_E_stem"/>
    <property type="match status" value="1"/>
</dbReference>
<dbReference type="Pfam" id="PF02832">
    <property type="entry name" value="Flavi_glycop_C"/>
    <property type="match status" value="1"/>
</dbReference>
<dbReference type="Pfam" id="PF00869">
    <property type="entry name" value="Flavi_glycoprot"/>
    <property type="match status" value="1"/>
</dbReference>
<dbReference type="Pfam" id="PF01004">
    <property type="entry name" value="Flavi_M"/>
    <property type="match status" value="1"/>
</dbReference>
<dbReference type="Pfam" id="PF00948">
    <property type="entry name" value="Flavi_NS1"/>
    <property type="match status" value="1"/>
</dbReference>
<dbReference type="Pfam" id="PF01005">
    <property type="entry name" value="Flavi_NS2A"/>
    <property type="match status" value="1"/>
</dbReference>
<dbReference type="Pfam" id="PF01002">
    <property type="entry name" value="Flavi_NS2B"/>
    <property type="match status" value="1"/>
</dbReference>
<dbReference type="Pfam" id="PF01350">
    <property type="entry name" value="Flavi_NS4A"/>
    <property type="match status" value="1"/>
</dbReference>
<dbReference type="Pfam" id="PF01349">
    <property type="entry name" value="Flavi_NS4B"/>
    <property type="match status" value="1"/>
</dbReference>
<dbReference type="Pfam" id="PF00972">
    <property type="entry name" value="Flavi_NS5"/>
    <property type="match status" value="1"/>
</dbReference>
<dbReference type="Pfam" id="PF20483">
    <property type="entry name" value="Flavi_NS5_thumb"/>
    <property type="match status" value="1"/>
</dbReference>
<dbReference type="Pfam" id="PF01570">
    <property type="entry name" value="Flavi_propep"/>
    <property type="match status" value="1"/>
</dbReference>
<dbReference type="Pfam" id="PF01728">
    <property type="entry name" value="FtsJ"/>
    <property type="match status" value="1"/>
</dbReference>
<dbReference type="Pfam" id="PF00949">
    <property type="entry name" value="Peptidase_S7"/>
    <property type="match status" value="1"/>
</dbReference>
<dbReference type="PIRSF" id="PIRSF003817">
    <property type="entry name" value="Gen_Poly_FLV"/>
    <property type="match status" value="1"/>
</dbReference>
<dbReference type="SMART" id="SM00487">
    <property type="entry name" value="DEXDc"/>
    <property type="match status" value="1"/>
</dbReference>
<dbReference type="SMART" id="SM00490">
    <property type="entry name" value="HELICc"/>
    <property type="match status" value="1"/>
</dbReference>
<dbReference type="SUPFAM" id="SSF56672">
    <property type="entry name" value="DNA/RNA polymerases"/>
    <property type="match status" value="1"/>
</dbReference>
<dbReference type="SUPFAM" id="SSF81296">
    <property type="entry name" value="E set domains"/>
    <property type="match status" value="1"/>
</dbReference>
<dbReference type="SUPFAM" id="SSF52540">
    <property type="entry name" value="P-loop containing nucleoside triphosphate hydrolases"/>
    <property type="match status" value="2"/>
</dbReference>
<dbReference type="SUPFAM" id="SSF53335">
    <property type="entry name" value="S-adenosyl-L-methionine-dependent methyltransferases"/>
    <property type="match status" value="1"/>
</dbReference>
<dbReference type="SUPFAM" id="SSF50494">
    <property type="entry name" value="Trypsin-like serine proteases"/>
    <property type="match status" value="1"/>
</dbReference>
<dbReference type="SUPFAM" id="SSF56983">
    <property type="entry name" value="Viral glycoprotein, central and dimerisation domains"/>
    <property type="match status" value="1"/>
</dbReference>
<dbReference type="PROSITE" id="PS51527">
    <property type="entry name" value="FLAVIVIRUS_NS2B"/>
    <property type="match status" value="1"/>
</dbReference>
<dbReference type="PROSITE" id="PS51528">
    <property type="entry name" value="FLAVIVIRUS_NS3PRO"/>
    <property type="match status" value="1"/>
</dbReference>
<dbReference type="PROSITE" id="PS51192">
    <property type="entry name" value="HELICASE_ATP_BIND_1"/>
    <property type="match status" value="1"/>
</dbReference>
<dbReference type="PROSITE" id="PS51194">
    <property type="entry name" value="HELICASE_CTER"/>
    <property type="match status" value="1"/>
</dbReference>
<dbReference type="PROSITE" id="PS50507">
    <property type="entry name" value="RDRP_SSRNA_POS"/>
    <property type="match status" value="1"/>
</dbReference>
<dbReference type="PROSITE" id="PS51591">
    <property type="entry name" value="RNA_CAP01_NS5_MT"/>
    <property type="match status" value="1"/>
</dbReference>
<protein>
    <recommendedName>
        <fullName>Genome polyprotein</fullName>
    </recommendedName>
    <component>
        <recommendedName>
            <fullName>Capsid protein C</fullName>
        </recommendedName>
        <alternativeName>
            <fullName>Core protein</fullName>
        </alternativeName>
    </component>
    <component>
        <recommendedName>
            <fullName>Protein prM</fullName>
        </recommendedName>
    </component>
    <component>
        <recommendedName>
            <fullName>Peptide pr</fullName>
        </recommendedName>
    </component>
    <component>
        <recommendedName>
            <fullName>Small envelope protein M</fullName>
        </recommendedName>
        <alternativeName>
            <fullName>Matrix protein</fullName>
        </alternativeName>
    </component>
    <component>
        <recommendedName>
            <fullName>Envelope protein E</fullName>
        </recommendedName>
    </component>
    <component>
        <recommendedName>
            <fullName>Non-structural protein 1</fullName>
            <shortName>NS1</shortName>
        </recommendedName>
    </component>
    <component>
        <recommendedName>
            <fullName>Non-structural protein 2A</fullName>
            <shortName>NS2A</shortName>
        </recommendedName>
    </component>
    <component>
        <recommendedName>
            <fullName>Non-structural protein 2A-alpha</fullName>
            <shortName>NS2A-alpha</shortName>
        </recommendedName>
    </component>
    <component>
        <recommendedName>
            <fullName>Serine protease subunit NS2B</fullName>
        </recommendedName>
        <alternativeName>
            <fullName>Flavivirin protease NS2B regulatory subunit</fullName>
        </alternativeName>
        <alternativeName>
            <fullName>Non-structural protein 2B</fullName>
        </alternativeName>
    </component>
    <component>
        <recommendedName>
            <fullName>Serine protease NS3</fullName>
            <ecNumber>3.4.21.91</ecNumber>
            <ecNumber evidence="10">3.6.1.15</ecNumber>
            <ecNumber evidence="10">3.6.4.13</ecNumber>
        </recommendedName>
        <alternativeName>
            <fullName>Flavivirin protease NS3 catalytic subunit</fullName>
        </alternativeName>
        <alternativeName>
            <fullName>Non-structural protein 3</fullName>
        </alternativeName>
    </component>
    <component>
        <recommendedName>
            <fullName>Non-structural protein 4A</fullName>
            <shortName>NS4A</shortName>
        </recommendedName>
    </component>
    <component>
        <recommendedName>
            <fullName>Peptide 2k</fullName>
        </recommendedName>
    </component>
    <component>
        <recommendedName>
            <fullName>Non-structural protein 4B</fullName>
            <shortName>NS4B</shortName>
        </recommendedName>
    </component>
    <component>
        <recommendedName>
            <fullName>RNA-directed RNA polymerase NS5</fullName>
            <ecNumber evidence="16">2.1.1.56</ecNumber>
            <ecNumber evidence="16">2.1.1.57</ecNumber>
            <ecNumber evidence="12">2.7.7.48</ecNumber>
        </recommendedName>
        <alternativeName>
            <fullName>Non-structural protein 5</fullName>
        </alternativeName>
    </component>
</protein>
<organism>
    <name type="scientific">Yellow fever virus (isolate Ethiopia/Couma/1961)</name>
    <name type="common">YFV</name>
    <dbReference type="NCBI Taxonomy" id="407141"/>
    <lineage>
        <taxon>Viruses</taxon>
        <taxon>Riboviria</taxon>
        <taxon>Orthornavirae</taxon>
        <taxon>Kitrinoviricota</taxon>
        <taxon>Flasuviricetes</taxon>
        <taxon>Amarillovirales</taxon>
        <taxon>Flaviviridae</taxon>
        <taxon>Orthoflavivirus</taxon>
        <taxon>Orthoflavivirus flavi</taxon>
    </lineage>
</organism>
<keyword id="KW-0007">Acetylation</keyword>
<keyword id="KW-1072">Activation of host autophagy by virus</keyword>
<keyword id="KW-0067">ATP-binding</keyword>
<keyword id="KW-0167">Capsid protein</keyword>
<keyword id="KW-1165">Clathrin-mediated endocytosis of virus by host</keyword>
<keyword id="KW-0165">Cleavage on pair of basic residues</keyword>
<keyword id="KW-1015">Disulfide bond</keyword>
<keyword id="KW-1170">Fusion of virus membrane with host endosomal membrane</keyword>
<keyword id="KW-1168">Fusion of virus membrane with host membrane</keyword>
<keyword id="KW-0325">Glycoprotein</keyword>
<keyword id="KW-0342">GTP-binding</keyword>
<keyword id="KW-0347">Helicase</keyword>
<keyword id="KW-1035">Host cytoplasm</keyword>
<keyword id="KW-1038">Host endoplasmic reticulum</keyword>
<keyword id="KW-1043">Host membrane</keyword>
<keyword id="KW-1048">Host nucleus</keyword>
<keyword id="KW-0945">Host-virus interaction</keyword>
<keyword id="KW-0378">Hydrolase</keyword>
<keyword id="KW-1090">Inhibition of host innate immune response by virus</keyword>
<keyword id="KW-1114">Inhibition of host interferon signaling pathway by virus</keyword>
<keyword id="KW-1106">Inhibition of host STAT2 by virus</keyword>
<keyword id="KW-0922">Interferon antiviral system evasion</keyword>
<keyword id="KW-0472">Membrane</keyword>
<keyword id="KW-0479">Metal-binding</keyword>
<keyword id="KW-0489">Methyltransferase</keyword>
<keyword id="KW-0506">mRNA capping</keyword>
<keyword id="KW-0507">mRNA processing</keyword>
<keyword id="KW-0511">Multifunctional enzyme</keyword>
<keyword id="KW-0547">Nucleotide-binding</keyword>
<keyword id="KW-0548">Nucleotidyltransferase</keyword>
<keyword id="KW-0597">Phosphoprotein</keyword>
<keyword id="KW-0645">Protease</keyword>
<keyword id="KW-0694">RNA-binding</keyword>
<keyword id="KW-0696">RNA-directed RNA polymerase</keyword>
<keyword id="KW-0949">S-adenosyl-L-methionine</keyword>
<keyword id="KW-0964">Secreted</keyword>
<keyword id="KW-0720">Serine protease</keyword>
<keyword id="KW-0941">Suppressor of RNA silencing</keyword>
<keyword id="KW-0804">Transcription</keyword>
<keyword id="KW-0805">Transcription regulation</keyword>
<keyword id="KW-0808">Transferase</keyword>
<keyword id="KW-0812">Transmembrane</keyword>
<keyword id="KW-1133">Transmembrane helix</keyword>
<keyword id="KW-0832">Ubl conjugation</keyword>
<keyword id="KW-1161">Viral attachment to host cell</keyword>
<keyword id="KW-0261">Viral envelope protein</keyword>
<keyword id="KW-0899">Viral immunoevasion</keyword>
<keyword id="KW-1162">Viral penetration into host cytoplasm</keyword>
<keyword id="KW-0693">Viral RNA replication</keyword>
<keyword id="KW-0946">Virion</keyword>
<keyword id="KW-1164">Virus endocytosis by host</keyword>
<keyword id="KW-1160">Virus entry into host cell</keyword>
<keyword id="KW-0862">Zinc</keyword>
<organismHost>
    <name type="scientific">Aedes aegypti</name>
    <name type="common">Yellowfever mosquito</name>
    <name type="synonym">Culex aegypti</name>
    <dbReference type="NCBI Taxonomy" id="7159"/>
</organismHost>
<organismHost>
    <name type="scientific">Aedes luteocephalus</name>
    <name type="common">Mosquito</name>
    <dbReference type="NCBI Taxonomy" id="299629"/>
</organismHost>
<organismHost>
    <name type="scientific">Aedes simpsoni</name>
    <dbReference type="NCBI Taxonomy" id="7161"/>
</organismHost>
<organismHost>
    <name type="scientific">Homo sapiens</name>
    <name type="common">Human</name>
    <dbReference type="NCBI Taxonomy" id="9606"/>
</organismHost>
<organismHost>
    <name type="scientific">Simiiformes</name>
    <dbReference type="NCBI Taxonomy" id="314293"/>
</organismHost>
<reference key="1">
    <citation type="journal article" date="2006" name="J. Gen. Virol.">
        <title>Genome analysis and phylogenetic relationships between east, central and west African isolates of Yellow fever virus.</title>
        <authorList>
            <person name="von Lindern J.J."/>
            <person name="Aroner S."/>
            <person name="Barrett N.D."/>
            <person name="Wicker J.A."/>
            <person name="Davis C.T."/>
            <person name="Barrett A.D."/>
        </authorList>
    </citation>
    <scope>NUCLEOTIDE SEQUENCE [GENOMIC RNA]</scope>
</reference>
<evidence type="ECO:0000250" key="1"/>
<evidence type="ECO:0000250" key="2">
    <source>
        <dbReference type="UniProtKB" id="P03314"/>
    </source>
</evidence>
<evidence type="ECO:0000250" key="3">
    <source>
        <dbReference type="UniProtKB" id="P14335"/>
    </source>
</evidence>
<evidence type="ECO:0000250" key="4">
    <source>
        <dbReference type="UniProtKB" id="P14336"/>
    </source>
</evidence>
<evidence type="ECO:0000250" key="5">
    <source>
        <dbReference type="UniProtKB" id="P14340"/>
    </source>
</evidence>
<evidence type="ECO:0000250" key="6">
    <source>
        <dbReference type="UniProtKB" id="P17763"/>
    </source>
</evidence>
<evidence type="ECO:0000250" key="7">
    <source>
        <dbReference type="UniProtKB" id="P29990"/>
    </source>
</evidence>
<evidence type="ECO:0000250" key="8">
    <source>
        <dbReference type="UniProtKB" id="Q32ZE1"/>
    </source>
</evidence>
<evidence type="ECO:0000250" key="9">
    <source>
        <dbReference type="UniProtKB" id="Q6YMS4"/>
    </source>
</evidence>
<evidence type="ECO:0000250" key="10">
    <source>
        <dbReference type="UniProtKB" id="Q9Q6P4"/>
    </source>
</evidence>
<evidence type="ECO:0000255" key="11"/>
<evidence type="ECO:0000255" key="12">
    <source>
        <dbReference type="PROSITE-ProRule" id="PRU00539"/>
    </source>
</evidence>
<evidence type="ECO:0000255" key="13">
    <source>
        <dbReference type="PROSITE-ProRule" id="PRU00541"/>
    </source>
</evidence>
<evidence type="ECO:0000255" key="14">
    <source>
        <dbReference type="PROSITE-ProRule" id="PRU00859"/>
    </source>
</evidence>
<evidence type="ECO:0000255" key="15">
    <source>
        <dbReference type="PROSITE-ProRule" id="PRU00860"/>
    </source>
</evidence>
<evidence type="ECO:0000255" key="16">
    <source>
        <dbReference type="PROSITE-ProRule" id="PRU00924"/>
    </source>
</evidence>
<evidence type="ECO:0000256" key="17">
    <source>
        <dbReference type="SAM" id="MobiDB-lite"/>
    </source>
</evidence>
<evidence type="ECO:0000305" key="18"/>
<feature type="chain" id="PRO_0000405162" description="Genome polyprotein">
    <location>
        <begin position="1"/>
        <end position="3412"/>
    </location>
</feature>
<feature type="chain" id="PRO_0000261560" description="Capsid protein C" evidence="2">
    <location>
        <begin position="1"/>
        <end position="101"/>
    </location>
</feature>
<feature type="propeptide" id="PRO_0000261561" description="ER anchor for the capsid protein C, removed in mature form by serine protease NS3" evidence="2">
    <location>
        <begin position="102"/>
        <end position="121"/>
    </location>
</feature>
<feature type="chain" id="PRO_0000261562" description="Protein prM" evidence="7">
    <location>
        <begin position="122"/>
        <end position="285"/>
    </location>
</feature>
<feature type="chain" id="PRO_0000261563" description="Peptide pr" evidence="7">
    <location>
        <begin position="122"/>
        <end position="210"/>
    </location>
</feature>
<feature type="chain" id="PRO_0000261564" description="Small envelope protein M" evidence="7">
    <location>
        <begin position="211"/>
        <end position="285"/>
    </location>
</feature>
<feature type="chain" id="PRO_0000261565" description="Envelope protein E" evidence="7">
    <location>
        <begin position="286"/>
        <end position="778"/>
    </location>
</feature>
<feature type="chain" id="PRO_0000261566" description="Non-structural protein 1" evidence="2">
    <location>
        <begin position="779"/>
        <end position="1130"/>
    </location>
</feature>
<feature type="chain" id="PRO_0000261567" description="Non-structural protein 2A" evidence="7">
    <location>
        <begin position="1131"/>
        <end position="1354"/>
    </location>
</feature>
<feature type="chain" id="PRO_0000261568" description="Non-structural protein 2A-alpha" evidence="7">
    <location>
        <begin position="1131"/>
        <end position="1320"/>
    </location>
</feature>
<feature type="chain" id="PRO_0000261569" description="Serine protease subunit NS2B" evidence="2">
    <location>
        <begin position="1355"/>
        <end position="1484"/>
    </location>
</feature>
<feature type="chain" id="PRO_0000261570" description="Serine protease NS3" evidence="2">
    <location>
        <begin position="1485"/>
        <end position="2107"/>
    </location>
</feature>
<feature type="chain" id="PRO_0000261571" description="Non-structural protein 4A" evidence="2">
    <location>
        <begin position="2108"/>
        <end position="2233"/>
    </location>
</feature>
<feature type="peptide" id="PRO_0000261572" description="Peptide 2k" evidence="2">
    <location>
        <begin position="2234"/>
        <end position="2256"/>
    </location>
</feature>
<feature type="chain" id="PRO_0000261573" description="Non-structural protein 4B" evidence="2">
    <location>
        <begin position="2257"/>
        <end position="2507"/>
    </location>
</feature>
<feature type="chain" id="PRO_0000261574" description="RNA-directed RNA polymerase NS5" evidence="2">
    <location>
        <begin position="2508"/>
        <end position="3412"/>
    </location>
</feature>
<feature type="topological domain" description="Cytoplasmic" evidence="11">
    <location>
        <begin position="1"/>
        <end position="104"/>
    </location>
</feature>
<feature type="transmembrane region" description="Helical" evidence="11">
    <location>
        <begin position="105"/>
        <end position="125"/>
    </location>
</feature>
<feature type="topological domain" description="Extracellular" evidence="11">
    <location>
        <begin position="126"/>
        <end position="244"/>
    </location>
</feature>
<feature type="transmembrane region" description="Helical" evidence="11">
    <location>
        <begin position="245"/>
        <end position="265"/>
    </location>
</feature>
<feature type="topological domain" description="Cytoplasmic" evidence="11">
    <location>
        <begin position="266"/>
        <end position="270"/>
    </location>
</feature>
<feature type="transmembrane region" description="Helical" evidence="11">
    <location>
        <begin position="271"/>
        <end position="285"/>
    </location>
</feature>
<feature type="topological domain" description="Extracellular" evidence="11">
    <location>
        <begin position="286"/>
        <end position="730"/>
    </location>
</feature>
<feature type="transmembrane region" description="Helical" evidence="11">
    <location>
        <begin position="731"/>
        <end position="751"/>
    </location>
</feature>
<feature type="topological domain" description="Extracellular" evidence="11">
    <location>
        <begin position="752"/>
        <end position="757"/>
    </location>
</feature>
<feature type="transmembrane region" description="Helical" evidence="11">
    <location>
        <begin position="758"/>
        <end position="778"/>
    </location>
</feature>
<feature type="topological domain" description="Extracellular" evidence="2">
    <location>
        <begin position="779"/>
        <end position="1132"/>
    </location>
</feature>
<feature type="transmembrane region" description="Helical" evidence="2">
    <location>
        <begin position="1133"/>
        <end position="1153"/>
    </location>
</feature>
<feature type="topological domain" description="Cytoplasmic" evidence="2">
    <location>
        <begin position="1154"/>
        <end position="1201"/>
    </location>
</feature>
<feature type="transmembrane region" description="Helical" evidence="2">
    <location>
        <begin position="1202"/>
        <end position="1222"/>
    </location>
</feature>
<feature type="topological domain" description="Lumenal" evidence="2">
    <location>
        <begin position="1223"/>
        <end position="1287"/>
    </location>
</feature>
<feature type="transmembrane region" description="Helical" evidence="2">
    <location>
        <begin position="1288"/>
        <end position="1308"/>
    </location>
</feature>
<feature type="topological domain" description="Cytoplasmic" evidence="2">
    <location>
        <begin position="1309"/>
        <end position="1355"/>
    </location>
</feature>
<feature type="transmembrane region" description="Helical" evidence="2">
    <location>
        <begin position="1356"/>
        <end position="1376"/>
    </location>
</feature>
<feature type="topological domain" description="Lumenal" evidence="2">
    <location>
        <begin position="1377"/>
        <end position="1378"/>
    </location>
</feature>
<feature type="transmembrane region" description="Helical" evidence="11">
    <location>
        <begin position="1379"/>
        <end position="1399"/>
    </location>
</feature>
<feature type="topological domain" description="Cytoplasmic" evidence="11">
    <location>
        <begin position="1400"/>
        <end position="1456"/>
    </location>
</feature>
<feature type="intramembrane region" description="Helical" evidence="11">
    <location>
        <begin position="1457"/>
        <end position="1477"/>
    </location>
</feature>
<feature type="topological domain" description="Cytoplasmic" evidence="11">
    <location>
        <begin position="1478"/>
        <end position="2157"/>
    </location>
</feature>
<feature type="transmembrane region" description="Helical" evidence="11">
    <location>
        <begin position="2158"/>
        <end position="2178"/>
    </location>
</feature>
<feature type="topological domain" description="Lumenal" evidence="11">
    <location>
        <begin position="2179"/>
        <end position="2186"/>
    </location>
</feature>
<feature type="intramembrane region" description="Helical" evidence="11">
    <location>
        <begin position="2187"/>
        <end position="2207"/>
    </location>
</feature>
<feature type="topological domain" description="Lumenal" evidence="11">
    <location>
        <begin position="2208"/>
        <end position="2209"/>
    </location>
</feature>
<feature type="transmembrane region" description="Helical" evidence="11">
    <location>
        <begin position="2210"/>
        <end position="2230"/>
    </location>
</feature>
<feature type="topological domain" description="Cytoplasmic" evidence="11">
    <location>
        <begin position="2231"/>
        <end position="2241"/>
    </location>
</feature>
<feature type="transmembrane region" description="Helical; Note=Signal for NS4B" evidence="11">
    <location>
        <begin position="2242"/>
        <end position="2262"/>
    </location>
</feature>
<feature type="topological domain" description="Lumenal" evidence="11">
    <location>
        <begin position="2263"/>
        <end position="2293"/>
    </location>
</feature>
<feature type="intramembrane region" description="Helical" evidence="11">
    <location>
        <begin position="2294"/>
        <end position="2314"/>
    </location>
</feature>
<feature type="topological domain" description="Lumenal" evidence="11">
    <location>
        <begin position="2315"/>
        <end position="2360"/>
    </location>
</feature>
<feature type="transmembrane region" description="Helical" evidence="11">
    <location>
        <begin position="2361"/>
        <end position="2380"/>
    </location>
</feature>
<feature type="topological domain" description="Cytoplasmic" evidence="11">
    <location>
        <begin position="2381"/>
        <end position="2421"/>
    </location>
</feature>
<feature type="transmembrane region" description="Helical" evidence="11">
    <location>
        <begin position="2422"/>
        <end position="2442"/>
    </location>
</feature>
<feature type="topological domain" description="Lumenal" evidence="11">
    <location>
        <begin position="2443"/>
        <end position="2445"/>
    </location>
</feature>
<feature type="transmembrane region" description="Helical" evidence="11">
    <location>
        <begin position="2446"/>
        <end position="2466"/>
    </location>
</feature>
<feature type="topological domain" description="Cytoplasmic" evidence="11">
    <location>
        <begin position="2467"/>
        <end position="3411"/>
    </location>
</feature>
<feature type="domain" description="Peptidase S7" evidence="15">
    <location>
        <begin position="1485"/>
        <end position="1665"/>
    </location>
</feature>
<feature type="domain" description="Helicase ATP-binding" evidence="13">
    <location>
        <begin position="1669"/>
        <end position="1825"/>
    </location>
</feature>
<feature type="domain" description="Helicase C-terminal">
    <location>
        <begin position="1820"/>
        <end position="1997"/>
    </location>
</feature>
<feature type="domain" description="mRNA cap 0-1 NS5-type MT" evidence="16">
    <location>
        <begin position="2508"/>
        <end position="2772"/>
    </location>
</feature>
<feature type="domain" description="RdRp catalytic" evidence="12">
    <location>
        <begin position="3036"/>
        <end position="3188"/>
    </location>
</feature>
<feature type="region of interest" description="Hydrophobic; homodimerization of capsid protein C" evidence="7">
    <location>
        <begin position="38"/>
        <end position="72"/>
    </location>
</feature>
<feature type="region of interest" description="Fusion peptide" evidence="4">
    <location>
        <begin position="383"/>
        <end position="396"/>
    </location>
</feature>
<feature type="region of interest" description="Interacts with and activates NS3 protease" evidence="14">
    <location>
        <begin position="1407"/>
        <end position="1446"/>
    </location>
</feature>
<feature type="region of interest" description="Important for RNA-binding" evidence="5">
    <location>
        <begin position="1673"/>
        <end position="1676"/>
    </location>
</feature>
<feature type="region of interest" description="Disordered" evidence="17">
    <location>
        <begin position="1942"/>
        <end position="1961"/>
    </location>
</feature>
<feature type="short sequence motif" description="DEAH box" evidence="13">
    <location>
        <begin position="1773"/>
        <end position="1776"/>
    </location>
</feature>
<feature type="short sequence motif" description="Nuclear localization signal" evidence="1">
    <location>
        <begin position="2879"/>
        <end position="2912"/>
    </location>
</feature>
<feature type="active site" description="Charge relay system; for serine protease NS3 activity" evidence="15">
    <location>
        <position position="1537"/>
    </location>
</feature>
<feature type="active site" description="Charge relay system; for serine protease NS3 activity" evidence="15">
    <location>
        <position position="1561"/>
    </location>
</feature>
<feature type="active site" description="Charge relay system; for serine protease NS3 activity" evidence="15">
    <location>
        <position position="1622"/>
    </location>
</feature>
<feature type="active site" description="For 2'-O-MTase activity" evidence="9">
    <location>
        <position position="2568"/>
    </location>
</feature>
<feature type="active site" description="For 2'-O-MTase activity" evidence="9">
    <location>
        <position position="2653"/>
    </location>
</feature>
<feature type="active site" description="For 2'-O-MTase activity" evidence="9">
    <location>
        <position position="2689"/>
    </location>
</feature>
<feature type="active site" description="For 2'-O-MTase activity" evidence="9">
    <location>
        <position position="2725"/>
    </location>
</feature>
<feature type="binding site" evidence="13">
    <location>
        <begin position="1682"/>
        <end position="1689"/>
    </location>
    <ligand>
        <name>ATP</name>
        <dbReference type="ChEBI" id="CHEBI:30616"/>
    </ligand>
</feature>
<feature type="binding site" evidence="16">
    <location>
        <position position="2563"/>
    </location>
    <ligand>
        <name>S-adenosyl-L-methionine</name>
        <dbReference type="ChEBI" id="CHEBI:59789"/>
    </ligand>
</feature>
<feature type="binding site" evidence="16">
    <location>
        <position position="2593"/>
    </location>
    <ligand>
        <name>S-adenosyl-L-methionine</name>
        <dbReference type="ChEBI" id="CHEBI:59789"/>
    </ligand>
</feature>
<feature type="binding site" evidence="16">
    <location>
        <position position="2594"/>
    </location>
    <ligand>
        <name>S-adenosyl-L-methionine</name>
        <dbReference type="ChEBI" id="CHEBI:59789"/>
    </ligand>
</feature>
<feature type="binding site" evidence="16">
    <location>
        <position position="2611"/>
    </location>
    <ligand>
        <name>S-adenosyl-L-methionine</name>
        <dbReference type="ChEBI" id="CHEBI:59789"/>
    </ligand>
</feature>
<feature type="binding site" evidence="16">
    <location>
        <position position="2612"/>
    </location>
    <ligand>
        <name>S-adenosyl-L-methionine</name>
        <dbReference type="ChEBI" id="CHEBI:59789"/>
    </ligand>
</feature>
<feature type="binding site" evidence="16">
    <location>
        <position position="2638"/>
    </location>
    <ligand>
        <name>S-adenosyl-L-methionine</name>
        <dbReference type="ChEBI" id="CHEBI:59789"/>
    </ligand>
</feature>
<feature type="binding site" evidence="16">
    <location>
        <position position="2639"/>
    </location>
    <ligand>
        <name>S-adenosyl-L-methionine</name>
        <dbReference type="ChEBI" id="CHEBI:59789"/>
    </ligand>
</feature>
<feature type="binding site" evidence="16">
    <location>
        <position position="2654"/>
    </location>
    <ligand>
        <name>S-adenosyl-L-methionine</name>
        <dbReference type="ChEBI" id="CHEBI:59789"/>
    </ligand>
</feature>
<feature type="binding site" evidence="16">
    <location>
        <position position="2727"/>
    </location>
    <ligand>
        <name>S-adenosyl-L-methionine</name>
        <dbReference type="ChEBI" id="CHEBI:59789"/>
    </ligand>
</feature>
<feature type="binding site" evidence="3">
    <location>
        <position position="2946"/>
    </location>
    <ligand>
        <name>Zn(2+)</name>
        <dbReference type="ChEBI" id="CHEBI:29105"/>
        <label>1</label>
    </ligand>
</feature>
<feature type="binding site" evidence="3">
    <location>
        <position position="2950"/>
    </location>
    <ligand>
        <name>Zn(2+)</name>
        <dbReference type="ChEBI" id="CHEBI:29105"/>
        <label>1</label>
    </ligand>
</feature>
<feature type="binding site" evidence="3">
    <location>
        <position position="2955"/>
    </location>
    <ligand>
        <name>Zn(2+)</name>
        <dbReference type="ChEBI" id="CHEBI:29105"/>
        <label>1</label>
    </ligand>
</feature>
<feature type="binding site" evidence="3">
    <location>
        <position position="2958"/>
    </location>
    <ligand>
        <name>Zn(2+)</name>
        <dbReference type="ChEBI" id="CHEBI:29105"/>
        <label>1</label>
    </ligand>
</feature>
<feature type="binding site" evidence="3">
    <location>
        <position position="3223"/>
    </location>
    <ligand>
        <name>Zn(2+)</name>
        <dbReference type="ChEBI" id="CHEBI:29105"/>
        <label>2</label>
    </ligand>
</feature>
<feature type="binding site" evidence="3">
    <location>
        <position position="3239"/>
    </location>
    <ligand>
        <name>Zn(2+)</name>
        <dbReference type="ChEBI" id="CHEBI:29105"/>
        <label>2</label>
    </ligand>
</feature>
<feature type="binding site" evidence="3">
    <location>
        <position position="3358"/>
    </location>
    <ligand>
        <name>Zn(2+)</name>
        <dbReference type="ChEBI" id="CHEBI:29105"/>
        <label>2</label>
    </ligand>
</feature>
<feature type="site" description="Cleavage; by viral protease NS3" evidence="2">
    <location>
        <begin position="101"/>
        <end position="102"/>
    </location>
</feature>
<feature type="site" description="Cleavage; by host signal peptidase" evidence="2">
    <location>
        <begin position="121"/>
        <end position="122"/>
    </location>
</feature>
<feature type="site" description="Cleavage; by host furin" evidence="7">
    <location>
        <begin position="210"/>
        <end position="211"/>
    </location>
</feature>
<feature type="site" description="Cleavage; by host signal peptidase" evidence="7">
    <location>
        <begin position="285"/>
        <end position="286"/>
    </location>
</feature>
<feature type="site" description="Cleavage; by host signal peptidase" evidence="2">
    <location>
        <begin position="778"/>
        <end position="779"/>
    </location>
</feature>
<feature type="site" description="Cleavage; by host" evidence="7">
    <location>
        <begin position="1130"/>
        <end position="1131"/>
    </location>
</feature>
<feature type="site" description="Cleavage; by viral protease NS3" evidence="7">
    <location>
        <begin position="1354"/>
        <end position="1355"/>
    </location>
</feature>
<feature type="site" description="Cleavage; by autolysis" evidence="2">
    <location>
        <begin position="1484"/>
        <end position="1485"/>
    </location>
</feature>
<feature type="site" description="Involved in NS3 ATPase and RTPase activities" evidence="3">
    <location>
        <position position="1945"/>
    </location>
</feature>
<feature type="site" description="Involved in NS3 ATPase and RTPase activities" evidence="3">
    <location>
        <position position="1948"/>
    </location>
</feature>
<feature type="site" description="Cleavage; by autolysis" evidence="2">
    <location>
        <begin position="2107"/>
        <end position="2108"/>
    </location>
</feature>
<feature type="site" description="Cleavage; by viral protease NS3" evidence="7">
    <location>
        <begin position="2233"/>
        <end position="2234"/>
    </location>
</feature>
<feature type="site" description="Cleavage; by host signal peptidase" evidence="7">
    <location>
        <begin position="2256"/>
        <end position="2257"/>
    </location>
</feature>
<feature type="site" description="Cleavage; by viral protease NS3" evidence="2">
    <location>
        <begin position="2507"/>
        <end position="2508"/>
    </location>
</feature>
<feature type="site" description="mRNA cap binding" evidence="16">
    <location>
        <position position="2520"/>
    </location>
</feature>
<feature type="site" description="mRNA cap binding; via carbonyl oxygen" evidence="16">
    <location>
        <position position="2523"/>
    </location>
</feature>
<feature type="site" description="mRNA cap binding" evidence="16">
    <location>
        <position position="2524"/>
    </location>
</feature>
<feature type="site" description="mRNA cap binding; via carbonyl oxygen" evidence="16">
    <location>
        <position position="2526"/>
    </location>
</feature>
<feature type="site" description="mRNA cap binding" evidence="16">
    <location>
        <position position="2531"/>
    </location>
</feature>
<feature type="site" description="mRNA cap binding" evidence="16">
    <location>
        <position position="2535"/>
    </location>
</feature>
<feature type="site" description="Essential for 2'-O-methyltransferase activity" evidence="16">
    <location>
        <position position="2568"/>
    </location>
</feature>
<feature type="site" description="Essential for 2'-O-methyltransferase and N-7 methyltransferase activity" evidence="16">
    <location>
        <position position="2653"/>
    </location>
</feature>
<feature type="site" description="mRNA cap binding" evidence="16">
    <location>
        <position position="2657"/>
    </location>
</feature>
<feature type="site" description="Essential for 2'-O-methyltransferase activity" evidence="16">
    <location>
        <position position="2689"/>
    </location>
</feature>
<feature type="site" description="mRNA cap binding" evidence="16">
    <location>
        <position position="2720"/>
    </location>
</feature>
<feature type="site" description="mRNA cap binding" evidence="16">
    <location>
        <position position="2722"/>
    </location>
</feature>
<feature type="site" description="Essential for 2'-O-methyltransferase activity" evidence="16">
    <location>
        <position position="2725"/>
    </location>
</feature>
<feature type="modified residue" description="N6-acetyllysine; by host" evidence="8">
    <location>
        <position position="1877"/>
    </location>
</feature>
<feature type="modified residue" description="Phosphoserine" evidence="2">
    <location>
        <position position="2563"/>
    </location>
</feature>
<feature type="glycosylation site" description="N-linked (GlcNAc...) asparagine; by host" evidence="11">
    <location>
        <position position="134"/>
    </location>
</feature>
<feature type="glycosylation site" description="N-linked (GlcNAc...) asparagine; by host" evidence="11">
    <location>
        <position position="150"/>
    </location>
</feature>
<feature type="glycosylation site" description="N-linked (GlcNAc...) asparagine; by host" evidence="11">
    <location>
        <position position="908"/>
    </location>
</feature>
<feature type="glycosylation site" description="N-linked (GlcNAc...) asparagine; by host" evidence="11">
    <location>
        <position position="986"/>
    </location>
</feature>
<feature type="disulfide bond" evidence="6">
    <location>
        <begin position="288"/>
        <end position="315"/>
    </location>
</feature>
<feature type="disulfide bond" evidence="6">
    <location>
        <begin position="345"/>
        <end position="406"/>
    </location>
</feature>
<feature type="disulfide bond" evidence="1">
    <location>
        <begin position="345"/>
        <end position="401"/>
    </location>
</feature>
<feature type="disulfide bond" evidence="6">
    <location>
        <begin position="359"/>
        <end position="390"/>
    </location>
</feature>
<feature type="disulfide bond" evidence="1">
    <location>
        <begin position="377"/>
        <end position="406"/>
    </location>
</feature>
<feature type="disulfide bond" evidence="6">
    <location>
        <begin position="377"/>
        <end position="401"/>
    </location>
</feature>
<feature type="disulfide bond" evidence="6">
    <location>
        <begin position="467"/>
        <end position="568"/>
    </location>
</feature>
<feature type="disulfide bond" evidence="6">
    <location>
        <begin position="585"/>
        <end position="615"/>
    </location>
</feature>
<feature type="disulfide bond" evidence="6">
    <location>
        <begin position="782"/>
        <end position="793"/>
    </location>
</feature>
<feature type="disulfide bond" evidence="6">
    <location>
        <begin position="833"/>
        <end position="921"/>
    </location>
</feature>
<feature type="disulfide bond" evidence="6">
    <location>
        <begin position="957"/>
        <end position="1002"/>
    </location>
</feature>
<feature type="disulfide bond" evidence="6">
    <location>
        <begin position="1058"/>
        <end position="1107"/>
    </location>
</feature>
<feature type="disulfide bond" evidence="6">
    <location>
        <begin position="1069"/>
        <end position="1091"/>
    </location>
</feature>
<feature type="disulfide bond" evidence="6">
    <location>
        <begin position="1090"/>
        <end position="1094"/>
    </location>
</feature>